<comment type="function">
    <text evidence="4 7">MFS-type transporter; part of the lna gene cluster that mediates the biosynthesis of diastereomeric piperazines. Lna and lnb clusters encode sets of enzymes that produce overlapping sets of previously undescribed metabolites such as piperazinomycin-like metabolites or morpholine (PubMed:23281040). The lna and lnb biosynthetic pathways appear to be part of a signaling network that controls the formation of sclerotia, a resilient overwintering structure (PubMed:23281040). May be involved in the secretion of the metabolites produced by the lna and lnb clusters (Probable).</text>
</comment>
<comment type="subcellular location">
    <subcellularLocation>
        <location evidence="6">Cell membrane</location>
        <topology evidence="1">Multi-pass membrane protein</topology>
    </subcellularLocation>
</comment>
<comment type="similarity">
    <text evidence="6">Belongs to the major facilitator superfamily. Sugar transporter (TC 2.A.1.1) family.</text>
</comment>
<name>LNAF_ASPFN</name>
<feature type="chain" id="PRO_0000446083" description="MFS-type transporter lnaF">
    <location>
        <begin position="1"/>
        <end position="494"/>
    </location>
</feature>
<feature type="transmembrane region" description="Helical" evidence="1">
    <location>
        <begin position="105"/>
        <end position="125"/>
    </location>
</feature>
<feature type="transmembrane region" description="Helical" evidence="1">
    <location>
        <begin position="128"/>
        <end position="148"/>
    </location>
</feature>
<feature type="transmembrane region" description="Helical" evidence="1">
    <location>
        <begin position="156"/>
        <end position="176"/>
    </location>
</feature>
<feature type="transmembrane region" description="Helical" evidence="1">
    <location>
        <begin position="203"/>
        <end position="223"/>
    </location>
</feature>
<feature type="transmembrane region" description="Helical" evidence="1">
    <location>
        <begin position="228"/>
        <end position="248"/>
    </location>
</feature>
<feature type="transmembrane region" description="Helical" evidence="1">
    <location>
        <begin position="290"/>
        <end position="310"/>
    </location>
</feature>
<feature type="transmembrane region" description="Helical" evidence="1">
    <location>
        <begin position="323"/>
        <end position="343"/>
    </location>
</feature>
<feature type="transmembrane region" description="Helical" evidence="1">
    <location>
        <begin position="354"/>
        <end position="374"/>
    </location>
</feature>
<feature type="transmembrane region" description="Helical" evidence="1">
    <location>
        <begin position="383"/>
        <end position="403"/>
    </location>
</feature>
<feature type="transmembrane region" description="Helical" evidence="1">
    <location>
        <begin position="446"/>
        <end position="466"/>
    </location>
</feature>
<feature type="region of interest" description="Disordered" evidence="3">
    <location>
        <begin position="1"/>
        <end position="51"/>
    </location>
</feature>
<feature type="compositionally biased region" description="Basic and acidic residues" evidence="3">
    <location>
        <begin position="12"/>
        <end position="26"/>
    </location>
</feature>
<feature type="glycosylation site" description="N-linked (GlcNAc...) asparagine" evidence="2">
    <location>
        <position position="40"/>
    </location>
</feature>
<feature type="glycosylation site" description="N-linked (GlcNAc...) asparagine" evidence="2">
    <location>
        <position position="58"/>
    </location>
</feature>
<feature type="glycosylation site" description="N-linked (GlcNAc...) asparagine" evidence="2">
    <location>
        <position position="68"/>
    </location>
</feature>
<keyword id="KW-1003">Cell membrane</keyword>
<keyword id="KW-0325">Glycoprotein</keyword>
<keyword id="KW-0472">Membrane</keyword>
<keyword id="KW-0812">Transmembrane</keyword>
<keyword id="KW-1133">Transmembrane helix</keyword>
<keyword id="KW-0813">Transport</keyword>
<accession>B8NU03</accession>
<sequence length="494" mass="54332">MTYDPENAMGEARADAPVEAEKEHEATQTTVKESTLGYDNSSDPSRRDSYRPTKLQSNLTIVSCYIANFSDGFQNSLANPTNVIFKKLLGTDGYPSEMQTRISNSLLIGAILGVLALGYTSDMFSRRAGLLFTSGLVAIGTLMSTLALQVHPTYNMLWYFVIVRGIAGFGVGGEYPPSAAAGIEESDDFKRKYRGPLFVSFTTLMATSAAPIQMIVYLICLIASNDNLPVTFHAIYSIATILPVIIMVLRFFMTDSTLFHYSNFKRQKRPLKFYLLLLKRYRWRLFTTSLAFFLYDFINFPNSIMSSTIINSLVKDHNIRTTAIWQVILGALPVPGVIVGAWLTNAIGRRYTGILGFAGYMVLGFVIGGTFPHLSKNMPAFVVLYGLLQALGHMGPGATIGLISTESFPTAMRGMGYSIATAFGRTGAAVGTQCFTPLQERAGKQSTFYLAGGIAILGMIVYWFLPESSELNLEEEDRDLSVFLAENGFPMEKA</sequence>
<dbReference type="EMBL" id="EQ963484">
    <property type="protein sequence ID" value="EED46510.1"/>
    <property type="molecule type" value="Genomic_DNA"/>
</dbReference>
<dbReference type="RefSeq" id="XP_002384046.1">
    <property type="nucleotide sequence ID" value="XM_002384005.1"/>
</dbReference>
<dbReference type="SMR" id="B8NU03"/>
<dbReference type="STRING" id="332952.B8NU03"/>
<dbReference type="GlyCosmos" id="B8NU03">
    <property type="glycosylation" value="3 sites, No reported glycans"/>
</dbReference>
<dbReference type="EnsemblFungi" id="EED46510">
    <property type="protein sequence ID" value="EED46510"/>
    <property type="gene ID" value="AFLA_101740"/>
</dbReference>
<dbReference type="VEuPathDB" id="FungiDB:AFLA_010424"/>
<dbReference type="eggNOG" id="KOG0252">
    <property type="taxonomic scope" value="Eukaryota"/>
</dbReference>
<dbReference type="HOGENOM" id="CLU_001265_46_12_1"/>
<dbReference type="OMA" id="VRGICGF"/>
<dbReference type="GO" id="GO:0005886">
    <property type="term" value="C:plasma membrane"/>
    <property type="evidence" value="ECO:0007669"/>
    <property type="project" value="UniProtKB-SubCell"/>
</dbReference>
<dbReference type="GO" id="GO:0046943">
    <property type="term" value="F:carboxylic acid transmembrane transporter activity"/>
    <property type="evidence" value="ECO:0007669"/>
    <property type="project" value="TreeGrafter"/>
</dbReference>
<dbReference type="Gene3D" id="1.20.1250.20">
    <property type="entry name" value="MFS general substrate transporter like domains"/>
    <property type="match status" value="1"/>
</dbReference>
<dbReference type="InterPro" id="IPR020846">
    <property type="entry name" value="MFS_dom"/>
</dbReference>
<dbReference type="InterPro" id="IPR005828">
    <property type="entry name" value="MFS_sugar_transport-like"/>
</dbReference>
<dbReference type="InterPro" id="IPR036259">
    <property type="entry name" value="MFS_trans_sf"/>
</dbReference>
<dbReference type="PANTHER" id="PTHR23508">
    <property type="entry name" value="CARBOXYLIC ACID TRANSPORTER PROTEIN HOMOLOG"/>
    <property type="match status" value="1"/>
</dbReference>
<dbReference type="PANTHER" id="PTHR23508:SF10">
    <property type="entry name" value="CARBOXYLIC ACID TRANSPORTER PROTEIN HOMOLOG"/>
    <property type="match status" value="1"/>
</dbReference>
<dbReference type="Pfam" id="PF00083">
    <property type="entry name" value="Sugar_tr"/>
    <property type="match status" value="2"/>
</dbReference>
<dbReference type="SUPFAM" id="SSF103473">
    <property type="entry name" value="MFS general substrate transporter"/>
    <property type="match status" value="1"/>
</dbReference>
<dbReference type="PROSITE" id="PS50850">
    <property type="entry name" value="MFS"/>
    <property type="match status" value="1"/>
</dbReference>
<gene>
    <name evidence="5" type="primary">lnaF</name>
    <name type="ORF">AFLA_101740</name>
</gene>
<protein>
    <recommendedName>
        <fullName evidence="5">MFS-type transporter lnaF</fullName>
    </recommendedName>
    <alternativeName>
        <fullName evidence="5">Lna diastereomeric piperazines biosynthesis cluster protein F</fullName>
    </alternativeName>
</protein>
<reference key="1">
    <citation type="journal article" date="2015" name="Genome Announc.">
        <title>Genome sequence of Aspergillus flavus NRRL 3357, a strain that causes aflatoxin contamination of food and feed.</title>
        <authorList>
            <person name="Nierman W.C."/>
            <person name="Yu J."/>
            <person name="Fedorova-Abrams N.D."/>
            <person name="Losada L."/>
            <person name="Cleveland T.E."/>
            <person name="Bhatnagar D."/>
            <person name="Bennett J.W."/>
            <person name="Dean R."/>
            <person name="Payne G.A."/>
        </authorList>
    </citation>
    <scope>NUCLEOTIDE SEQUENCE [LARGE SCALE GENOMIC DNA]</scope>
    <source>
        <strain>ATCC 200026 / FGSC A1120 / IAM 13836 / NRRL 3357 / JCM 12722 / SRRC 167</strain>
    </source>
</reference>
<reference key="2">
    <citation type="journal article" date="2013" name="Angew. Chem. Int. Ed.">
        <title>Homologous NRPS-like gene clusters mediate redundant small-molecule biosynthesis in Aspergillus flavus.</title>
        <authorList>
            <person name="Forseth R.R."/>
            <person name="Amaike S."/>
            <person name="Schwenk D."/>
            <person name="Affeldt K.J."/>
            <person name="Hoffmeister D."/>
            <person name="Schroeder F.C."/>
            <person name="Keller N.P."/>
        </authorList>
    </citation>
    <scope>IDENTIFICATION</scope>
    <scope>FUNCTION</scope>
    <scope>INDUCTION</scope>
    <scope>PATHWAY</scope>
</reference>
<evidence type="ECO:0000255" key="1"/>
<evidence type="ECO:0000255" key="2">
    <source>
        <dbReference type="PROSITE-ProRule" id="PRU00498"/>
    </source>
</evidence>
<evidence type="ECO:0000256" key="3">
    <source>
        <dbReference type="SAM" id="MobiDB-lite"/>
    </source>
</evidence>
<evidence type="ECO:0000269" key="4">
    <source>
    </source>
</evidence>
<evidence type="ECO:0000303" key="5">
    <source>
    </source>
</evidence>
<evidence type="ECO:0000305" key="6"/>
<evidence type="ECO:0000305" key="7">
    <source>
    </source>
</evidence>
<proteinExistence type="evidence at transcript level"/>
<organism>
    <name type="scientific">Aspergillus flavus (strain ATCC 200026 / FGSC A1120 / IAM 13836 / NRRL 3357 / JCM 12722 / SRRC 167)</name>
    <dbReference type="NCBI Taxonomy" id="332952"/>
    <lineage>
        <taxon>Eukaryota</taxon>
        <taxon>Fungi</taxon>
        <taxon>Dikarya</taxon>
        <taxon>Ascomycota</taxon>
        <taxon>Pezizomycotina</taxon>
        <taxon>Eurotiomycetes</taxon>
        <taxon>Eurotiomycetidae</taxon>
        <taxon>Eurotiales</taxon>
        <taxon>Aspergillaceae</taxon>
        <taxon>Aspergillus</taxon>
        <taxon>Aspergillus subgen. Circumdati</taxon>
    </lineage>
</organism>